<comment type="function">
    <text>FS800 is likely to have some function in the production or maintenance of the schistosome egg.</text>
</comment>
<comment type="developmental stage">
    <text>Highest level only in mature worms, i.e. during egg production.</text>
</comment>
<comment type="miscellaneous">
    <text>The two FS800 proteins are read from two overlapping reading frames.</text>
</comment>
<proteinExistence type="evidence at transcript level"/>
<organism>
    <name type="scientific">Schistosoma mansoni</name>
    <name type="common">Blood fluke</name>
    <dbReference type="NCBI Taxonomy" id="6183"/>
    <lineage>
        <taxon>Eukaryota</taxon>
        <taxon>Metazoa</taxon>
        <taxon>Spiralia</taxon>
        <taxon>Lophotrochozoa</taxon>
        <taxon>Platyhelminthes</taxon>
        <taxon>Trematoda</taxon>
        <taxon>Digenea</taxon>
        <taxon>Strigeidida</taxon>
        <taxon>Schistosomatoidea</taxon>
        <taxon>Schistosomatidae</taxon>
        <taxon>Schistosoma</taxon>
    </lineage>
</organism>
<keyword id="KW-1185">Reference proteome</keyword>
<evidence type="ECO:0000256" key="1">
    <source>
        <dbReference type="SAM" id="MobiDB-lite"/>
    </source>
</evidence>
<feature type="chain" id="PRO_0000087157" description="Female-specific protein 800">
    <location>
        <begin position="1"/>
        <end position="238"/>
    </location>
</feature>
<feature type="region of interest" description="Disordered" evidence="1">
    <location>
        <begin position="35"/>
        <end position="112"/>
    </location>
</feature>
<feature type="region of interest" description="Disordered" evidence="1">
    <location>
        <begin position="166"/>
        <end position="204"/>
    </location>
</feature>
<feature type="compositionally biased region" description="Low complexity" evidence="1">
    <location>
        <begin position="35"/>
        <end position="50"/>
    </location>
</feature>
<feature type="compositionally biased region" description="Polar residues" evidence="1">
    <location>
        <begin position="97"/>
        <end position="106"/>
    </location>
</feature>
<feature type="compositionally biased region" description="Basic and acidic residues" evidence="1">
    <location>
        <begin position="171"/>
        <end position="187"/>
    </location>
</feature>
<reference key="1">
    <citation type="journal article" date="1989" name="Mol. Biochem. Parasitol.">
        <title>Localization and pattern of expression of a female specific mRNA in Schistosoma mansoni.</title>
        <authorList>
            <person name="Reis M.G."/>
            <person name="Kuhns J."/>
            <person name="Blanton R."/>
            <person name="Davis A.H."/>
        </authorList>
    </citation>
    <scope>NUCLEOTIDE SEQUENCE [MRNA]</scope>
    <source>
        <strain>Puerto Rican</strain>
    </source>
</reference>
<protein>
    <recommendedName>
        <fullName>Female-specific protein 800</fullName>
        <shortName>FS800</shortName>
    </recommendedName>
</protein>
<accession>P16463</accession>
<dbReference type="EMBL" id="J03999">
    <property type="protein sequence ID" value="AAA29883.1"/>
    <property type="molecule type" value="mRNA"/>
</dbReference>
<dbReference type="RefSeq" id="XP_018645366.1">
    <property type="nucleotide sequence ID" value="XM_018791418.1"/>
</dbReference>
<dbReference type="STRING" id="6183.P16463"/>
<dbReference type="EnsemblMetazoa" id="Smp_307900.1">
    <property type="protein sequence ID" value="Smp_307900.1"/>
    <property type="gene ID" value="Smp_307900"/>
</dbReference>
<dbReference type="GeneID" id="8345296"/>
<dbReference type="KEGG" id="smm:Smp_077900"/>
<dbReference type="WBParaSite" id="Smp_307900.1">
    <property type="protein sequence ID" value="Smp_307900.1"/>
    <property type="gene ID" value="Smp_307900"/>
</dbReference>
<dbReference type="CTD" id="8345296"/>
<dbReference type="HOGENOM" id="CLU_1167129_0_0_1"/>
<dbReference type="InParanoid" id="P16463"/>
<dbReference type="OrthoDB" id="6260244at2759"/>
<dbReference type="PhylomeDB" id="P16463"/>
<dbReference type="Proteomes" id="UP000008854">
    <property type="component" value="Unassembled WGS sequence"/>
</dbReference>
<dbReference type="InterPro" id="IPR012615">
    <property type="entry name" value="TES"/>
</dbReference>
<dbReference type="Pfam" id="PF08034">
    <property type="entry name" value="TES"/>
    <property type="match status" value="1"/>
</dbReference>
<name>F801_SCHMA</name>
<sequence length="238" mass="27993">MKYIHILLVFIILSLFITVIKSNYYDNNNQNQNQYSYHHTYNNNNQGNYQSKNVHSESEQNSYNKETRNNNDDDDDDENFERNKKSIRSRYHGYTYRNDQIQSRGNSAKGGSYSESTYFTLHSGTDRYGRRNDYSRFQTRGRSNGYRENMFLNVFDVVGNIKTTRNKRKITKSEKNGRYIKKDHMNNRDSNTNINEKPEYSKSPVFQGGYRSLEKNFTTNYGNSSNASIPLSGKQSQL</sequence>